<name>CTNA2_XENTR</name>
<sequence>MSSATSPIILKWDPKSLEIRTLTVESLLEPLVTQVTTLVNTSNKGPSGKKKGRSKKAHVLAASVEQATQNFLEKGEQIAKESQDLKEELISAVEDVRKQGDTMRITSSEFADDPCSSVKRGTMVRAARALLSAVTRLLILADMADVMRLLIHLKIVEEALESVKNATNEQDLAHRFKEFGKEMVKLNYVAARRQQELKDPHCRDEMAAARGALKKNATMLYTASQAFLRHPDVAATRANRDYVFKQVQEAIAGIANAAQATSPTDEKQAHTGIGELAAALNEFDNKIILDPLTFSEARFRPSLEEKLESIISGAALMADSSCTRDDRRERIVAECNSVRQALQDLLSEYMNNCRYGTWMDESCKSGRKEKGDPLNIAIDKMTKKTRDLRRQLRKAVMDHISDSFLETNVPLLVLIEAAKNGNEKEVKEYAQVFREHANKLVEVANLACSISNNEEGVKLVRMAATQIDSLCPQVINAALTLAARPQSKVAQDNMDVFKDQWEKQVRVLTEAVDDITSVDDFLSVSENHILEDVNKCVIALQEGDVDTLDRTAGAIRGRAARVIHIINAEMENYEAGVYTEKVLDATKLLCETVMPRFAEQVEFAIEALSANIPQPFEENEFIDASRLVYDGVRDIRKAVLMIRTPEELEDDSDFEQEDYDVRSRTSVQTEDDQLIAGQSARAIMAQLPQEEKAKIAEQVEIFHQEKSKLDAEVAKWDDSGNDIIVLAKQMCMIMMEMTDFTRGKGPLKNTSDVINAAKKIAEAGSRMDKLARAVADQCPDSACKQDLIAYLQRIALYCHQLNICSKVKAEVQNLGGELIVSGTAVQSTFTTFYEVAGDVIAGGRDSQLSLDLLPSCTEGSLFGSGSRDSTMLDSATSLIQAAKNLMNAVVLTVKASYVASTKYQKVYGTAAVNSPVVSWKMKAPEKKPLVKREKPEEYQTRVRRGSQKKHISPVQALSEFKAMDSF</sequence>
<gene>
    <name type="primary">ctnna2</name>
</gene>
<dbReference type="EMBL" id="BC135120">
    <property type="protein sequence ID" value="AAI35121.1"/>
    <property type="molecule type" value="mRNA"/>
</dbReference>
<dbReference type="RefSeq" id="NP_001090774.1">
    <property type="nucleotide sequence ID" value="NM_001097305.1"/>
</dbReference>
<dbReference type="SMR" id="A4IGI7"/>
<dbReference type="FunCoup" id="A4IGI7">
    <property type="interactions" value="1154"/>
</dbReference>
<dbReference type="STRING" id="8364.ENSXETP00000038277"/>
<dbReference type="PaxDb" id="8364-ENSXETP00000058946"/>
<dbReference type="GeneID" id="100037860"/>
<dbReference type="KEGG" id="xtr:100037860"/>
<dbReference type="AGR" id="Xenbase:XB-GENE-5955201"/>
<dbReference type="CTD" id="1496"/>
<dbReference type="Xenbase" id="XB-GENE-5955201">
    <property type="gene designation" value="ctnna2"/>
</dbReference>
<dbReference type="eggNOG" id="KOG3681">
    <property type="taxonomic scope" value="Eukaryota"/>
</dbReference>
<dbReference type="InParanoid" id="A4IGI7"/>
<dbReference type="OMA" id="MNNMRQF"/>
<dbReference type="OrthoDB" id="6376697at2759"/>
<dbReference type="Reactome" id="R-XTR-525793">
    <property type="pathway name" value="Myogenesis"/>
</dbReference>
<dbReference type="Proteomes" id="UP000008143">
    <property type="component" value="Chromosome 1"/>
</dbReference>
<dbReference type="Bgee" id="ENSXETG00000040099">
    <property type="expression patterns" value="Expressed in brain and 7 other cell types or tissues"/>
</dbReference>
<dbReference type="GO" id="GO:0015629">
    <property type="term" value="C:actin cytoskeleton"/>
    <property type="evidence" value="ECO:0007669"/>
    <property type="project" value="InterPro"/>
</dbReference>
<dbReference type="GO" id="GO:0005912">
    <property type="term" value="C:adherens junction"/>
    <property type="evidence" value="ECO:0000250"/>
    <property type="project" value="UniProtKB"/>
</dbReference>
<dbReference type="GO" id="GO:0030424">
    <property type="term" value="C:axon"/>
    <property type="evidence" value="ECO:0000250"/>
    <property type="project" value="UniProtKB"/>
</dbReference>
<dbReference type="GO" id="GO:0005737">
    <property type="term" value="C:cytoplasm"/>
    <property type="evidence" value="ECO:0000250"/>
    <property type="project" value="UniProtKB"/>
</dbReference>
<dbReference type="GO" id="GO:0005634">
    <property type="term" value="C:nucleus"/>
    <property type="evidence" value="ECO:0007669"/>
    <property type="project" value="UniProtKB-SubCell"/>
</dbReference>
<dbReference type="GO" id="GO:0005886">
    <property type="term" value="C:plasma membrane"/>
    <property type="evidence" value="ECO:0007669"/>
    <property type="project" value="UniProtKB-SubCell"/>
</dbReference>
<dbReference type="GO" id="GO:0051015">
    <property type="term" value="F:actin filament binding"/>
    <property type="evidence" value="ECO:0007669"/>
    <property type="project" value="InterPro"/>
</dbReference>
<dbReference type="GO" id="GO:0045296">
    <property type="term" value="F:cadherin binding"/>
    <property type="evidence" value="ECO:0007669"/>
    <property type="project" value="InterPro"/>
</dbReference>
<dbReference type="GO" id="GO:0005198">
    <property type="term" value="F:structural molecule activity"/>
    <property type="evidence" value="ECO:0007669"/>
    <property type="project" value="InterPro"/>
</dbReference>
<dbReference type="GO" id="GO:0007409">
    <property type="term" value="P:axonogenesis"/>
    <property type="evidence" value="ECO:0000250"/>
    <property type="project" value="UniProtKB"/>
</dbReference>
<dbReference type="GO" id="GO:0048854">
    <property type="term" value="P:brain morphogenesis"/>
    <property type="evidence" value="ECO:0000250"/>
    <property type="project" value="UniProtKB"/>
</dbReference>
<dbReference type="GO" id="GO:0098609">
    <property type="term" value="P:cell-cell adhesion"/>
    <property type="evidence" value="ECO:0000250"/>
    <property type="project" value="UniProtKB"/>
</dbReference>
<dbReference type="GO" id="GO:0048813">
    <property type="term" value="P:dendrite morphogenesis"/>
    <property type="evidence" value="ECO:0000250"/>
    <property type="project" value="UniProtKB"/>
</dbReference>
<dbReference type="GO" id="GO:0051823">
    <property type="term" value="P:regulation of synapse structural plasticity"/>
    <property type="evidence" value="ECO:0000250"/>
    <property type="project" value="UniProtKB"/>
</dbReference>
<dbReference type="FunFam" id="1.20.120.230:FF:000006">
    <property type="entry name" value="Catenin alpha 1"/>
    <property type="match status" value="1"/>
</dbReference>
<dbReference type="FunFam" id="1.20.120.230:FF:000007">
    <property type="entry name" value="Catenin alpha 1"/>
    <property type="match status" value="1"/>
</dbReference>
<dbReference type="FunFam" id="1.20.120.230:FF:000008">
    <property type="entry name" value="Catenin alpha 1"/>
    <property type="match status" value="1"/>
</dbReference>
<dbReference type="FunFam" id="1.20.120.230:FF:000011">
    <property type="entry name" value="Catenin alpha 1"/>
    <property type="match status" value="1"/>
</dbReference>
<dbReference type="Gene3D" id="6.10.250.2510">
    <property type="match status" value="1"/>
</dbReference>
<dbReference type="Gene3D" id="1.20.120.230">
    <property type="entry name" value="Alpha-catenin/vinculin-like"/>
    <property type="match status" value="5"/>
</dbReference>
<dbReference type="InterPro" id="IPR036723">
    <property type="entry name" value="Alpha-catenin/vinculin-like_sf"/>
</dbReference>
<dbReference type="InterPro" id="IPR001033">
    <property type="entry name" value="Alpha_catenin"/>
</dbReference>
<dbReference type="InterPro" id="IPR006077">
    <property type="entry name" value="Vinculin/catenin"/>
</dbReference>
<dbReference type="InterPro" id="IPR000633">
    <property type="entry name" value="Vinculin_CS"/>
</dbReference>
<dbReference type="PANTHER" id="PTHR18914">
    <property type="entry name" value="ALPHA CATENIN"/>
    <property type="match status" value="1"/>
</dbReference>
<dbReference type="PANTHER" id="PTHR18914:SF23">
    <property type="entry name" value="CATENIN ALPHA-2"/>
    <property type="match status" value="1"/>
</dbReference>
<dbReference type="Pfam" id="PF01044">
    <property type="entry name" value="Vinculin"/>
    <property type="match status" value="2"/>
</dbReference>
<dbReference type="PRINTS" id="PR00805">
    <property type="entry name" value="ALPHACATENIN"/>
</dbReference>
<dbReference type="SUPFAM" id="SSF47220">
    <property type="entry name" value="alpha-catenin/vinculin-like"/>
    <property type="match status" value="4"/>
</dbReference>
<dbReference type="PROSITE" id="PS00663">
    <property type="entry name" value="VINCULIN_1"/>
    <property type="match status" value="1"/>
</dbReference>
<keyword id="KW-0130">Cell adhesion</keyword>
<keyword id="KW-0965">Cell junction</keyword>
<keyword id="KW-1003">Cell membrane</keyword>
<keyword id="KW-0966">Cell projection</keyword>
<keyword id="KW-0963">Cytoplasm</keyword>
<keyword id="KW-0206">Cytoskeleton</keyword>
<keyword id="KW-0217">Developmental protein</keyword>
<keyword id="KW-0221">Differentiation</keyword>
<keyword id="KW-0472">Membrane</keyword>
<keyword id="KW-0539">Nucleus</keyword>
<keyword id="KW-1185">Reference proteome</keyword>
<reference key="1">
    <citation type="submission" date="2007-03" db="EMBL/GenBank/DDBJ databases">
        <authorList>
            <consortium name="NIH - Xenopus Gene Collection (XGC) project"/>
        </authorList>
    </citation>
    <scope>NUCLEOTIDE SEQUENCE [LARGE SCALE MRNA]</scope>
    <source>
        <tissue>Embryo</tissue>
    </source>
</reference>
<accession>A4IGI7</accession>
<comment type="function">
    <text evidence="2">May function as a linker between cadherin adhesion receptors and the cytoskeleton to regulate cell-cell adhesion and differentiation in the nervous system.</text>
</comment>
<comment type="subcellular location">
    <subcellularLocation>
        <location evidence="3">Cell membrane</location>
        <topology evidence="3">Peripheral membrane protein</topology>
        <orientation evidence="3">Cytoplasmic side</orientation>
    </subcellularLocation>
    <subcellularLocation>
        <location evidence="3">Cytoplasm</location>
    </subcellularLocation>
    <subcellularLocation>
        <location evidence="3">Cytoplasm</location>
        <location evidence="3">Cytoskeleton</location>
    </subcellularLocation>
    <subcellularLocation>
        <location evidence="3">Cell junction</location>
        <location evidence="3">Adherens junction</location>
    </subcellularLocation>
    <subcellularLocation>
        <location evidence="3">Cell projection</location>
        <location evidence="3">Axon</location>
    </subcellularLocation>
    <subcellularLocation>
        <location evidence="1">Nucleus</location>
    </subcellularLocation>
</comment>
<comment type="similarity">
    <text evidence="5">Belongs to the vinculin/alpha-catenin family.</text>
</comment>
<protein>
    <recommendedName>
        <fullName>Catenin alpha-2</fullName>
    </recommendedName>
    <alternativeName>
        <fullName>Alpha N-catenin</fullName>
    </alternativeName>
</protein>
<organism>
    <name type="scientific">Xenopus tropicalis</name>
    <name type="common">Western clawed frog</name>
    <name type="synonym">Silurana tropicalis</name>
    <dbReference type="NCBI Taxonomy" id="8364"/>
    <lineage>
        <taxon>Eukaryota</taxon>
        <taxon>Metazoa</taxon>
        <taxon>Chordata</taxon>
        <taxon>Craniata</taxon>
        <taxon>Vertebrata</taxon>
        <taxon>Euteleostomi</taxon>
        <taxon>Amphibia</taxon>
        <taxon>Batrachia</taxon>
        <taxon>Anura</taxon>
        <taxon>Pipoidea</taxon>
        <taxon>Pipidae</taxon>
        <taxon>Xenopodinae</taxon>
        <taxon>Xenopus</taxon>
        <taxon>Silurana</taxon>
    </lineage>
</organism>
<feature type="chain" id="PRO_0000383571" description="Catenin alpha-2">
    <location>
        <begin position="1"/>
        <end position="966"/>
    </location>
</feature>
<feature type="region of interest" description="Disordered" evidence="4">
    <location>
        <begin position="924"/>
        <end position="952"/>
    </location>
</feature>
<feature type="compositionally biased region" description="Basic and acidic residues" evidence="4">
    <location>
        <begin position="924"/>
        <end position="940"/>
    </location>
</feature>
<feature type="compositionally biased region" description="Basic residues" evidence="4">
    <location>
        <begin position="941"/>
        <end position="951"/>
    </location>
</feature>
<proteinExistence type="evidence at transcript level"/>
<evidence type="ECO:0000250" key="1">
    <source>
        <dbReference type="UniProtKB" id="P26232"/>
    </source>
</evidence>
<evidence type="ECO:0000250" key="2">
    <source>
        <dbReference type="UniProtKB" id="P30997"/>
    </source>
</evidence>
<evidence type="ECO:0000250" key="3">
    <source>
        <dbReference type="UniProtKB" id="Q61301"/>
    </source>
</evidence>
<evidence type="ECO:0000256" key="4">
    <source>
        <dbReference type="SAM" id="MobiDB-lite"/>
    </source>
</evidence>
<evidence type="ECO:0000305" key="5"/>